<dbReference type="EMBL" id="DQ365827">
    <property type="protein sequence ID" value="ABC94894.1"/>
    <property type="molecule type" value="mRNA"/>
</dbReference>
<dbReference type="EMBL" id="BC127902">
    <property type="protein sequence ID" value="AAI27903.1"/>
    <property type="molecule type" value="mRNA"/>
</dbReference>
<dbReference type="EMBL" id="BC146938">
    <property type="protein sequence ID" value="AAI46939.1"/>
    <property type="molecule type" value="mRNA"/>
</dbReference>
<dbReference type="CCDS" id="CCDS42787.1"/>
<dbReference type="RefSeq" id="NP_001036167.1">
    <property type="nucleotide sequence ID" value="NM_001042702.5"/>
</dbReference>
<dbReference type="RefSeq" id="NP_001356841.1">
    <property type="nucleotide sequence ID" value="NM_001369912.1"/>
</dbReference>
<dbReference type="BioGRID" id="138969">
    <property type="interactions" value="1"/>
</dbReference>
<dbReference type="FunCoup" id="Q0ZLH3">
    <property type="interactions" value="69"/>
</dbReference>
<dbReference type="IntAct" id="Q0ZLH3">
    <property type="interactions" value="1"/>
</dbReference>
<dbReference type="STRING" id="9606.ENSP00000495855"/>
<dbReference type="TCDB" id="1.C.123.1.7">
    <property type="family name" value="the pore-forming gasdermin (gasdermin) family"/>
</dbReference>
<dbReference type="iPTMnet" id="Q0ZLH3"/>
<dbReference type="PhosphoSitePlus" id="Q0ZLH3"/>
<dbReference type="BioMuta" id="PJVK"/>
<dbReference type="DMDM" id="114152117"/>
<dbReference type="MassIVE" id="Q0ZLH3"/>
<dbReference type="PaxDb" id="9606-ENSP00000386647"/>
<dbReference type="PeptideAtlas" id="Q0ZLH3"/>
<dbReference type="Antibodypedia" id="33935">
    <property type="antibodies" value="67 antibodies from 16 providers"/>
</dbReference>
<dbReference type="DNASU" id="494513"/>
<dbReference type="Ensembl" id="ENST00000375129.8">
    <property type="protein sequence ID" value="ENSP00000364271.4"/>
    <property type="gene ID" value="ENSG00000204311.15"/>
</dbReference>
<dbReference type="Ensembl" id="ENST00000644580.2">
    <property type="protein sequence ID" value="ENSP00000495855.2"/>
    <property type="gene ID" value="ENSG00000204311.15"/>
</dbReference>
<dbReference type="GeneID" id="494513"/>
<dbReference type="KEGG" id="hsa:494513"/>
<dbReference type="MANE-Select" id="ENST00000644580.2">
    <property type="protein sequence ID" value="ENSP00000495855.2"/>
    <property type="RefSeq nucleotide sequence ID" value="NM_001042702.5"/>
    <property type="RefSeq protein sequence ID" value="NP_001036167.1"/>
</dbReference>
<dbReference type="UCSC" id="uc002umi.5">
    <property type="organism name" value="human"/>
</dbReference>
<dbReference type="AGR" id="HGNC:29502"/>
<dbReference type="CTD" id="494513"/>
<dbReference type="DisGeNET" id="494513"/>
<dbReference type="GeneCards" id="PJVK"/>
<dbReference type="GeneReviews" id="PJVK"/>
<dbReference type="HGNC" id="HGNC:29502">
    <property type="gene designation" value="PJVK"/>
</dbReference>
<dbReference type="HPA" id="ENSG00000204311">
    <property type="expression patterns" value="Tissue enhanced (testis)"/>
</dbReference>
<dbReference type="MalaCards" id="PJVK"/>
<dbReference type="MIM" id="610219">
    <property type="type" value="gene"/>
</dbReference>
<dbReference type="MIM" id="610220">
    <property type="type" value="phenotype"/>
</dbReference>
<dbReference type="neXtProt" id="NX_Q0ZLH3"/>
<dbReference type="OpenTargets" id="ENSG00000204311"/>
<dbReference type="Orphanet" id="90636">
    <property type="disease" value="Rare autosomal recessive non-syndromic sensorineural deafness type DFNB"/>
</dbReference>
<dbReference type="PharmGKB" id="PA134927047"/>
<dbReference type="VEuPathDB" id="HostDB:ENSG00000204311"/>
<dbReference type="eggNOG" id="ENOG502QWBQ">
    <property type="taxonomic scope" value="Eukaryota"/>
</dbReference>
<dbReference type="GeneTree" id="ENSGT00950000183140"/>
<dbReference type="HOGENOM" id="CLU_068267_0_0_1"/>
<dbReference type="InParanoid" id="Q0ZLH3"/>
<dbReference type="OMA" id="IMNDVGF"/>
<dbReference type="OrthoDB" id="9436533at2759"/>
<dbReference type="PAN-GO" id="Q0ZLH3">
    <property type="GO annotations" value="3 GO annotations based on evolutionary models"/>
</dbReference>
<dbReference type="PhylomeDB" id="Q0ZLH3"/>
<dbReference type="TreeFam" id="TF352821"/>
<dbReference type="PathwayCommons" id="Q0ZLH3"/>
<dbReference type="Reactome" id="R-HSA-9662360">
    <property type="pathway name" value="Sensory processing of sound by inner hair cells of the cochlea"/>
</dbReference>
<dbReference type="Reactome" id="R-HSA-9662361">
    <property type="pathway name" value="Sensory processing of sound by outer hair cells of the cochlea"/>
</dbReference>
<dbReference type="BioGRID-ORCS" id="494513">
    <property type="hits" value="11 hits in 1140 CRISPR screens"/>
</dbReference>
<dbReference type="ChiTaRS" id="DFNB59">
    <property type="organism name" value="human"/>
</dbReference>
<dbReference type="GenomeRNAi" id="494513"/>
<dbReference type="Pharos" id="Q0ZLH3">
    <property type="development level" value="Tbio"/>
</dbReference>
<dbReference type="PRO" id="PR:Q0ZLH3"/>
<dbReference type="Proteomes" id="UP000005640">
    <property type="component" value="Chromosome 2"/>
</dbReference>
<dbReference type="RNAct" id="Q0ZLH3">
    <property type="molecule type" value="protein"/>
</dbReference>
<dbReference type="Bgee" id="ENSG00000204311">
    <property type="expression patterns" value="Expressed in sperm and 119 other cell types or tissues"/>
</dbReference>
<dbReference type="ExpressionAtlas" id="Q0ZLH3">
    <property type="expression patterns" value="baseline and differential"/>
</dbReference>
<dbReference type="GO" id="GO:0035253">
    <property type="term" value="C:ciliary rootlet"/>
    <property type="evidence" value="ECO:0007669"/>
    <property type="project" value="Ensembl"/>
</dbReference>
<dbReference type="GO" id="GO:0030864">
    <property type="term" value="C:cortical actin cytoskeleton"/>
    <property type="evidence" value="ECO:0007669"/>
    <property type="project" value="Ensembl"/>
</dbReference>
<dbReference type="GO" id="GO:0005737">
    <property type="term" value="C:cytoplasm"/>
    <property type="evidence" value="ECO:0000318"/>
    <property type="project" value="GO_Central"/>
</dbReference>
<dbReference type="GO" id="GO:0043025">
    <property type="term" value="C:neuronal cell body"/>
    <property type="evidence" value="ECO:0000318"/>
    <property type="project" value="GO_Central"/>
</dbReference>
<dbReference type="GO" id="GO:0005778">
    <property type="term" value="C:peroxisomal membrane"/>
    <property type="evidence" value="ECO:0000250"/>
    <property type="project" value="UniProtKB"/>
</dbReference>
<dbReference type="GO" id="GO:0120044">
    <property type="term" value="C:stereocilium base"/>
    <property type="evidence" value="ECO:0007669"/>
    <property type="project" value="Ensembl"/>
</dbReference>
<dbReference type="GO" id="GO:0050910">
    <property type="term" value="P:detection of mechanical stimulus involved in sensory perception of sound"/>
    <property type="evidence" value="ECO:0007669"/>
    <property type="project" value="Ensembl"/>
</dbReference>
<dbReference type="GO" id="GO:0000425">
    <property type="term" value="P:pexophagy"/>
    <property type="evidence" value="ECO:0000250"/>
    <property type="project" value="UniProtKB"/>
</dbReference>
<dbReference type="GO" id="GO:0097468">
    <property type="term" value="P:programmed cell death in response to reactive oxygen species"/>
    <property type="evidence" value="ECO:0000250"/>
    <property type="project" value="UniProtKB"/>
</dbReference>
<dbReference type="GO" id="GO:1900063">
    <property type="term" value="P:regulation of peroxisome organization"/>
    <property type="evidence" value="ECO:0000250"/>
    <property type="project" value="UniProtKB"/>
</dbReference>
<dbReference type="GO" id="GO:0000302">
    <property type="term" value="P:response to reactive oxygen species"/>
    <property type="evidence" value="ECO:0000250"/>
    <property type="project" value="UniProtKB"/>
</dbReference>
<dbReference type="GO" id="GO:0007605">
    <property type="term" value="P:sensory perception of sound"/>
    <property type="evidence" value="ECO:0000250"/>
    <property type="project" value="UniProtKB"/>
</dbReference>
<dbReference type="GO" id="GO:0120045">
    <property type="term" value="P:stereocilium maintenance"/>
    <property type="evidence" value="ECO:0007669"/>
    <property type="project" value="Ensembl"/>
</dbReference>
<dbReference type="InterPro" id="IPR040460">
    <property type="entry name" value="Gasdermin_pore"/>
</dbReference>
<dbReference type="InterPro" id="IPR042377">
    <property type="entry name" value="GSDME"/>
</dbReference>
<dbReference type="PANTHER" id="PTHR15207">
    <property type="entry name" value="NONSYNDROMIC HEARING IMPAIRMENT PROTEIN"/>
    <property type="match status" value="1"/>
</dbReference>
<dbReference type="PANTHER" id="PTHR15207:SF2">
    <property type="entry name" value="PEJVAKIN"/>
    <property type="match status" value="1"/>
</dbReference>
<dbReference type="Pfam" id="PF04598">
    <property type="entry name" value="Gasdermin"/>
    <property type="match status" value="1"/>
</dbReference>
<sequence length="352" mass="39913">MFAAATKSFVKQVGDGGRLVPVPSLSEADKYQPLSLVVKKKRCFLFPRYKFTSTPFTLKDILLGDREISAGISSYQLLNYEDESDVSLYGRRGNHIVNDVGINVAGSDSIAVKASFGIVTKHEVEVSTLLKEITTRKINFDHSLIRQSRSSRKAVLCVVMESIRTTRQCSLSVHAGIRGEAMRFHFMDEQNPKGRDKAIVFPAHTTIAFSVFELFIYLDGAFDLCVTSVSKGGFEREETATFALLYRLRNILFERNRRVMDVISRSQLYLDDLFSDYYDKPLSMTDISLKEGTHIRVNLLNHNIPKGPCILCGMGNFKRETVYGCFQCSVDGQKYVRLHAVPCFDIWHKRMK</sequence>
<comment type="function">
    <text evidence="1">Peroxisome-associated protein required to protect auditory hair cells against noise-induced damage. Acts by regulating noise-induced peroxisome proliferation in auditory hair cells and neurons, and promoting autophagic degradation of damaged peroxisomes (pexophagy). Noise overexposure increases reactive oxygen species (ROS) levels, causing oxidative damage to auditory hair cells and resulting in hearing loss. PJVK acts as a ROS sensor that recruits the autophagy machinery to trigger pexophagy of peroxisomes damaged by oxidative stress. In addition to pexophagy, also required to promote peroxisome proliferation in response to sound overstimulation.</text>
</comment>
<comment type="subunit">
    <text evidence="1">Interacts with MAP1LC3B; interaction is direct. Interacts with IQGAP1. Interacts with ROCK2. Interacts with TRIOBP.</text>
</comment>
<comment type="subcellular location">
    <subcellularLocation>
        <location evidence="1">Peroxisome membrane</location>
    </subcellularLocation>
    <subcellularLocation>
        <location evidence="1">Cell projection</location>
        <location evidence="1">Cilium</location>
    </subcellularLocation>
    <text evidence="1">Associates with the peroxisomal membrane; it is unclear whether it is embedded or just associated with the peroxisomal membrane. Localizes to ciliary rootlet.</text>
</comment>
<comment type="disease" evidence="2 3 4 5 6 7 8 9 10">
    <disease id="DI-00877">
        <name>Deafness, autosomal recessive, 59</name>
        <acronym>DFNB59</acronym>
        <description>A form of sensorineural hearing impairment with absent or severely abnormal auditory brainstem response but normal otoacoustic emissions (auditory neuropathy or auditory dys-synchrony). Auditory neuropathies result from a lesion in the area including the inner hair cells, connections between the inner hair cells and the cochlear branch of the auditory nerve, the auditory nerve itself and auditory pathways of the brainstem.</description>
        <dbReference type="MIM" id="610220"/>
    </disease>
    <text>The disease is caused by variants affecting the gene represented in this entry.</text>
</comment>
<comment type="miscellaneous">
    <text evidence="13">'Pejvakin' means 'echo' in Persian.</text>
</comment>
<comment type="similarity">
    <text evidence="12">Belongs to the gasdermin family.</text>
</comment>
<proteinExistence type="evidence at protein level"/>
<gene>
    <name evidence="11 14" type="primary">PJVK</name>
    <name type="synonym">DFNB59</name>
</gene>
<keyword id="KW-0966">Cell projection</keyword>
<keyword id="KW-0209">Deafness</keyword>
<keyword id="KW-0225">Disease variant</keyword>
<keyword id="KW-1009">Hearing</keyword>
<keyword id="KW-0472">Membrane</keyword>
<keyword id="KW-1010">Non-syndromic deafness</keyword>
<keyword id="KW-0576">Peroxisome</keyword>
<keyword id="KW-1267">Proteomics identification</keyword>
<keyword id="KW-1185">Reference proteome</keyword>
<feature type="chain" id="PRO_0000249042" description="Pejvakin">
    <location>
        <begin position="1"/>
        <end position="352"/>
    </location>
</feature>
<feature type="sequence variant" id="VAR_027387" description="In DFNB59; causes hypervulnerability to sound; dbSNP:rs118203988." evidence="2 9">
    <original>T</original>
    <variation>I</variation>
    <location>
        <position position="54"/>
    </location>
</feature>
<feature type="sequence variant" id="VAR_083912" description="In DFNB59." evidence="5">
    <location>
        <begin position="167"/>
        <end position="352"/>
    </location>
</feature>
<feature type="sequence variant" id="VAR_027388" description="In DFNB59; dbSNP:rs111706634." evidence="2 5">
    <original>R</original>
    <variation>W</variation>
    <location>
        <position position="183"/>
    </location>
</feature>
<feature type="sequence variant" id="VAR_089419" description="In DFNB59; likely pathogenic." evidence="10">
    <original>L</original>
    <variation>R</variation>
    <location>
        <position position="224"/>
    </location>
</feature>
<feature type="sequence variant" id="VAR_083913" description="In DFNB59; uncertain significance." evidence="5">
    <original>L</original>
    <variation>R</variation>
    <location>
        <position position="244"/>
    </location>
</feature>
<feature type="sequence variant" id="VAR_053103" description="In dbSNP:rs17304212.">
    <original>R</original>
    <variation>C</variation>
    <location>
        <position position="265"/>
    </location>
</feature>
<feature type="sequence variant" id="VAR_089420" description="In DFNB59; likely pathogenic." evidence="10">
    <original>H</original>
    <variation>D</variation>
    <location>
        <position position="294"/>
    </location>
</feature>
<feature type="sequence variant" id="VAR_083914" evidence="5">
    <original>L</original>
    <variation>R</variation>
    <location>
        <position position="299"/>
    </location>
</feature>
<feature type="sequence variant" id="VAR_068891" description="In DFNB59; dbSNP:rs569088856." evidence="7 10">
    <original>C</original>
    <variation>S</variation>
    <location>
        <position position="343"/>
    </location>
</feature>
<name>PJVK_HUMAN</name>
<accession>Q0ZLH3</accession>
<accession>A0PK14</accession>
<accession>B9EJE2</accession>
<protein>
    <recommendedName>
        <fullName evidence="11">Pejvakin</fullName>
    </recommendedName>
    <alternativeName>
        <fullName>Autosomal recessive deafness type 59 protein</fullName>
    </alternativeName>
</protein>
<organism>
    <name type="scientific">Homo sapiens</name>
    <name type="common">Human</name>
    <dbReference type="NCBI Taxonomy" id="9606"/>
    <lineage>
        <taxon>Eukaryota</taxon>
        <taxon>Metazoa</taxon>
        <taxon>Chordata</taxon>
        <taxon>Craniata</taxon>
        <taxon>Vertebrata</taxon>
        <taxon>Euteleostomi</taxon>
        <taxon>Mammalia</taxon>
        <taxon>Eutheria</taxon>
        <taxon>Euarchontoglires</taxon>
        <taxon>Primates</taxon>
        <taxon>Haplorrhini</taxon>
        <taxon>Catarrhini</taxon>
        <taxon>Hominidae</taxon>
        <taxon>Homo</taxon>
    </lineage>
</organism>
<reference key="1">
    <citation type="journal article" date="2006" name="Nat. Genet.">
        <title>Mutations in the gene encoding pejvakin, a newly identified protein of the afferent auditory pathway, cause DFNB59 auditory neuropathy.</title>
        <authorList>
            <person name="Delmaghani S."/>
            <person name="Del Castillo F.J."/>
            <person name="Michel V."/>
            <person name="Leibovici M."/>
            <person name="Aghaie A."/>
            <person name="Ron U."/>
            <person name="Van Laer L."/>
            <person name="Ben-Tal N."/>
            <person name="Van Camp G."/>
            <person name="Weil D."/>
            <person name="Langa F."/>
            <person name="Lathrop M."/>
            <person name="Avan P."/>
            <person name="Petit C."/>
        </authorList>
    </citation>
    <scope>NUCLEOTIDE SEQUENCE [MRNA]</scope>
    <scope>INVOLVEMENT IN DFNB59</scope>
    <scope>VARIANTS DFNB59 ILE-54 AND TRP-183</scope>
</reference>
<reference key="2">
    <citation type="journal article" date="2004" name="Genome Res.">
        <title>The status, quality, and expansion of the NIH full-length cDNA project: the Mammalian Gene Collection (MGC).</title>
        <authorList>
            <consortium name="The MGC Project Team"/>
        </authorList>
    </citation>
    <scope>NUCLEOTIDE SEQUENCE [LARGE SCALE MRNA]</scope>
</reference>
<reference key="3">
    <citation type="journal article" date="2007" name="Hum. Mutat.">
        <title>Truncating mutation of the DFNB59 gene causes cochlear hearing impairment and central vestibular dysfunction.</title>
        <authorList>
            <person name="Ebermann I."/>
            <person name="Walger M."/>
            <person name="Scholl H.P."/>
            <person name="Charbel Issa P."/>
            <person name="Lueke C."/>
            <person name="Nuernberg G."/>
            <person name="Lang-Roth R."/>
            <person name="Becker C."/>
            <person name="Nuernberg P."/>
            <person name="Bolz H.J."/>
        </authorList>
    </citation>
    <scope>INVOLVEMENT IN DFNB59</scope>
</reference>
<reference key="4">
    <citation type="journal article" date="2007" name="Clin. Genet.">
        <title>Novel mutations in the pejvakin gene are associated with autosomal recessive non-syndromic hearing loss in Iranian families.</title>
        <authorList>
            <person name="Hashemzadeh Chaleshtori M."/>
            <person name="Simpson M.A."/>
            <person name="Farrokhi E."/>
            <person name="Dolati M."/>
            <person name="Hoghooghi Rad L."/>
            <person name="Amani Geshnigani S."/>
            <person name="Crosby A.H."/>
        </authorList>
    </citation>
    <scope>INVOLVEMENT IN DFNB59</scope>
</reference>
<reference key="5">
    <citation type="journal article" date="2007" name="Hum. Mutat.">
        <title>Involvement of DFNB59 mutations in autosomal recessive nonsyndromic hearing impairment.</title>
        <authorList>
            <person name="Collin R.W."/>
            <person name="Kalay E."/>
            <person name="Oostrik J."/>
            <person name="Caylan R."/>
            <person name="Wollnik B."/>
            <person name="Arslan S."/>
            <person name="den Hollander A.I."/>
            <person name="Birinci Y."/>
            <person name="Lichtner P."/>
            <person name="Strom T.M."/>
            <person name="Toraman B."/>
            <person name="Hoefsloot L.H."/>
            <person name="Cremers C.W."/>
            <person name="Brunner H.G."/>
            <person name="Cremers F.P."/>
            <person name="Karaguzel A."/>
            <person name="Kremer H."/>
        </authorList>
    </citation>
    <scope>VARIANTS DFNB59 167-ARG--LYS-352 DEL; TRP-183 AND ARG-244</scope>
    <scope>VARIANT ARG-299</scope>
</reference>
<reference key="6">
    <citation type="journal article" date="2007" name="J. Neurosci.">
        <title>A forward genetics screen in mice identifies recessive deafness traits and reveals that pejvakin is essential for outer hair cell function.</title>
        <authorList>
            <person name="Schwander M."/>
            <person name="Sczaniecka A."/>
            <person name="Grillet N."/>
            <person name="Bailey J.S."/>
            <person name="Avenarius M."/>
            <person name="Najmabadi H."/>
            <person name="Steffy B.M."/>
            <person name="Federe G.C."/>
            <person name="Lagler E.A."/>
            <person name="Banan R."/>
            <person name="Hice R."/>
            <person name="Grabowski-Boase L."/>
            <person name="Keithley E.M."/>
            <person name="Ryan A.F."/>
            <person name="Housley G.D."/>
            <person name="Wiltshire T."/>
            <person name="Smith R.J."/>
            <person name="Tarantino L.M."/>
            <person name="Mueller U."/>
        </authorList>
    </citation>
    <scope>INVOLVEMENT IN DFNB59</scope>
</reference>
<reference key="7">
    <citation type="journal article" date="2012" name="Gene">
        <title>A p.C343S missense mutation in PJVK causes progressive hearing loss.</title>
        <authorList>
            <person name="Mujtaba G."/>
            <person name="Bukhari I."/>
            <person name="Fatima A."/>
            <person name="Naz S."/>
        </authorList>
    </citation>
    <scope>VARIANT DFNB59 SER-343</scope>
</reference>
<reference key="8">
    <citation type="journal article" date="2015" name="Acta Oto-Laryngol.">
        <title>Identification of a novel mutation of PJVK in the Chinese non-syndromic hearing loss population with low prevalence of the PJVK mutations.</title>
        <authorList>
            <person name="Zhang Q.J."/>
            <person name="Lan L."/>
            <person name="Li N."/>
            <person name="Qi Y."/>
            <person name="Zong L."/>
            <person name="Shi W."/>
            <person name="Yu L."/>
            <person name="Wang H."/>
            <person name="Yang J."/>
            <person name="Xie L.Y."/>
            <person name="Zhao F."/>
            <person name="Wang D.Y."/>
            <person name="Han B."/>
            <person name="Wang Q.J."/>
        </authorList>
    </citation>
    <scope>INVOLVEMENT IN DFNB59</scope>
</reference>
<reference key="9">
    <citation type="journal article" date="2015" name="Cell">
        <title>Hypervulnerability to sound exposure through impaired adaptive proliferation of peroxisomes.</title>
        <authorList>
            <person name="Delmaghani S."/>
            <person name="Defourny J."/>
            <person name="Aghaie A."/>
            <person name="Beurg M."/>
            <person name="Dulon D."/>
            <person name="Thelen N."/>
            <person name="Perfettini I."/>
            <person name="Zelles T."/>
            <person name="Aller M."/>
            <person name="Meyer A."/>
            <person name="Emptoz A."/>
            <person name="Giraudet F."/>
            <person name="Leibovici M."/>
            <person name="Dartevelle S."/>
            <person name="Soubigou G."/>
            <person name="Thiry M."/>
            <person name="Vizi E.S."/>
            <person name="Safieddine S."/>
            <person name="Hardelin J.P."/>
            <person name="Avan P."/>
            <person name="Petit C."/>
        </authorList>
    </citation>
    <scope>CHARACTERIZATION OF VARIANT DFNB59 ILE-54</scope>
</reference>
<reference key="10">
    <citation type="journal article" date="2022" name="Genes (Basel)">
        <title>Novel pathogenic variants in PJVK, the gene encoding pejvakin, in subjects with autosomal recessive non-syndromic hearing impairment and auditory neuropathy spectrum disorder.</title>
        <authorList>
            <person name="Dominguez-Ruiz M."/>
            <person name="Rodriguez-Ballesteros M."/>
            <person name="Gandia M."/>
            <person name="Gomez-Rosas E."/>
            <person name="Villamar M."/>
            <person name="Scimemi P."/>
            <person name="Mancini P."/>
            <person name="Rendtorff N.D."/>
            <person name="Moreno-Pelayo M.A."/>
            <person name="Tranebjaerg L."/>
            <person name="Meda C."/>
            <person name="Santarelli R."/>
            <person name="Del Castillo I."/>
        </authorList>
    </citation>
    <scope>VARIANTS DFNB59 ARG-224; ASP-294 AND SER-343</scope>
</reference>
<evidence type="ECO:0000250" key="1">
    <source>
        <dbReference type="UniProtKB" id="Q0ZLH2"/>
    </source>
</evidence>
<evidence type="ECO:0000269" key="2">
    <source>
    </source>
</evidence>
<evidence type="ECO:0000269" key="3">
    <source>
    </source>
</evidence>
<evidence type="ECO:0000269" key="4">
    <source>
    </source>
</evidence>
<evidence type="ECO:0000269" key="5">
    <source>
    </source>
</evidence>
<evidence type="ECO:0000269" key="6">
    <source>
    </source>
</evidence>
<evidence type="ECO:0000269" key="7">
    <source>
    </source>
</evidence>
<evidence type="ECO:0000269" key="8">
    <source>
    </source>
</evidence>
<evidence type="ECO:0000269" key="9">
    <source>
    </source>
</evidence>
<evidence type="ECO:0000269" key="10">
    <source>
    </source>
</evidence>
<evidence type="ECO:0000303" key="11">
    <source>
    </source>
</evidence>
<evidence type="ECO:0000305" key="12"/>
<evidence type="ECO:0000305" key="13">
    <source>
    </source>
</evidence>
<evidence type="ECO:0000312" key="14">
    <source>
        <dbReference type="HGNC" id="HGNC:29502"/>
    </source>
</evidence>